<comment type="function">
    <text evidence="1">Catalyzes the attachment of proline to tRNA(Pro) in a two-step reaction: proline is first activated by ATP to form Pro-AMP and then transferred to the acceptor end of tRNA(Pro).</text>
</comment>
<comment type="catalytic activity">
    <reaction evidence="1">
        <text>tRNA(Pro) + L-proline + ATP = L-prolyl-tRNA(Pro) + AMP + diphosphate</text>
        <dbReference type="Rhea" id="RHEA:14305"/>
        <dbReference type="Rhea" id="RHEA-COMP:9700"/>
        <dbReference type="Rhea" id="RHEA-COMP:9702"/>
        <dbReference type="ChEBI" id="CHEBI:30616"/>
        <dbReference type="ChEBI" id="CHEBI:33019"/>
        <dbReference type="ChEBI" id="CHEBI:60039"/>
        <dbReference type="ChEBI" id="CHEBI:78442"/>
        <dbReference type="ChEBI" id="CHEBI:78532"/>
        <dbReference type="ChEBI" id="CHEBI:456215"/>
        <dbReference type="EC" id="6.1.1.15"/>
    </reaction>
</comment>
<comment type="subunit">
    <text evidence="1">Homodimer.</text>
</comment>
<comment type="subcellular location">
    <subcellularLocation>
        <location evidence="1">Cytoplasm</location>
    </subcellularLocation>
</comment>
<comment type="domain">
    <text evidence="1">Consists of three domains: the N-terminal catalytic domain, the anticodon-binding domain and the C-terminal extension.</text>
</comment>
<comment type="similarity">
    <text evidence="1">Belongs to the class-II aminoacyl-tRNA synthetase family. ProS type 3 subfamily.</text>
</comment>
<name>SYP_ONYPE</name>
<accession>Q6YQX7</accession>
<reference key="1">
    <citation type="journal article" date="2004" name="Nat. Genet.">
        <title>Reductive evolution suggested from the complete genome sequence of a plant-pathogenic phytoplasma.</title>
        <authorList>
            <person name="Oshima K."/>
            <person name="Kakizawa S."/>
            <person name="Nishigawa H."/>
            <person name="Jung H.-Y."/>
            <person name="Wei W."/>
            <person name="Suzuki S."/>
            <person name="Arashida R."/>
            <person name="Nakata D."/>
            <person name="Miyata S."/>
            <person name="Ugaki M."/>
            <person name="Namba S."/>
        </authorList>
    </citation>
    <scope>NUCLEOTIDE SEQUENCE [LARGE SCALE GENOMIC DNA]</scope>
    <source>
        <strain>OY-M</strain>
    </source>
</reference>
<feature type="chain" id="PRO_0000249144" description="Proline--tRNA ligase">
    <location>
        <begin position="1"/>
        <end position="474"/>
    </location>
</feature>
<keyword id="KW-0030">Aminoacyl-tRNA synthetase</keyword>
<keyword id="KW-0067">ATP-binding</keyword>
<keyword id="KW-0963">Cytoplasm</keyword>
<keyword id="KW-0436">Ligase</keyword>
<keyword id="KW-0547">Nucleotide-binding</keyword>
<keyword id="KW-0648">Protein biosynthesis</keyword>
<protein>
    <recommendedName>
        <fullName evidence="1">Proline--tRNA ligase</fullName>
        <ecNumber evidence="1">6.1.1.15</ecNumber>
    </recommendedName>
    <alternativeName>
        <fullName evidence="1">Prolyl-tRNA synthetase</fullName>
        <shortName evidence="1">ProRS</shortName>
    </alternativeName>
</protein>
<evidence type="ECO:0000255" key="1">
    <source>
        <dbReference type="HAMAP-Rule" id="MF_01571"/>
    </source>
</evidence>
<proteinExistence type="inferred from homology"/>
<gene>
    <name evidence="1" type="primary">proS</name>
    <name type="ordered locus">PAM_246</name>
</gene>
<sequence>MKTMKRVKTVTARSSDFGKWYTDVCLKAELIAYSEAKGFIIYLPYGYALWENIQKHLNCTLQKTGHQNVYFPLVFPEKLFHKEKNHIQGFSPEAAMITTTGKKNLSEKLVIRPTSEILFSQYYSKTITSYRDLPKLYNQWCNVVRWEKTTKPFLRGKEFLWQEGHTVHATEQEAMQQTLSILDIYQKLGKNLLALPFVCGKKTETEKFAGALITYSIEALMHDGQALQAGTSHYLGTNFAKSFQIQFQDCDHQKKYVHQTSWGVSTRLIGALIMVHSDDEGLVLPPYVSPMQIVIIPLQPQDDAVKQTSENLFSILQKNYRVHLDLQDKTAGWKFSQYELKGVPLRIEIGKRGLENDEVTIFQRYNFAKQNIKTKDLPSQIPQLFETIHNNMYQKALQHLEQNRKQATTYEEFKTYLKQGGYVAMSISGTDAELQIKQETGATARVILETNLITANCPVTNKKALQTVLFARAY</sequence>
<dbReference type="EC" id="6.1.1.15" evidence="1"/>
<dbReference type="EMBL" id="AP006628">
    <property type="protein sequence ID" value="BAD04331.1"/>
    <property type="molecule type" value="Genomic_DNA"/>
</dbReference>
<dbReference type="SMR" id="Q6YQX7"/>
<dbReference type="STRING" id="262768.PAM_246"/>
<dbReference type="KEGG" id="poy:PAM_246"/>
<dbReference type="eggNOG" id="COG0441">
    <property type="taxonomic scope" value="Bacteria"/>
</dbReference>
<dbReference type="HOGENOM" id="CLU_001882_4_2_14"/>
<dbReference type="BioCyc" id="OYEL262768:G1G26-297-MONOMER"/>
<dbReference type="Proteomes" id="UP000002523">
    <property type="component" value="Chromosome"/>
</dbReference>
<dbReference type="GO" id="GO:0017101">
    <property type="term" value="C:aminoacyl-tRNA synthetase multienzyme complex"/>
    <property type="evidence" value="ECO:0007669"/>
    <property type="project" value="TreeGrafter"/>
</dbReference>
<dbReference type="GO" id="GO:0005737">
    <property type="term" value="C:cytoplasm"/>
    <property type="evidence" value="ECO:0007669"/>
    <property type="project" value="UniProtKB-SubCell"/>
</dbReference>
<dbReference type="GO" id="GO:0005524">
    <property type="term" value="F:ATP binding"/>
    <property type="evidence" value="ECO:0007669"/>
    <property type="project" value="UniProtKB-UniRule"/>
</dbReference>
<dbReference type="GO" id="GO:0004827">
    <property type="term" value="F:proline-tRNA ligase activity"/>
    <property type="evidence" value="ECO:0007669"/>
    <property type="project" value="UniProtKB-UniRule"/>
</dbReference>
<dbReference type="GO" id="GO:0006433">
    <property type="term" value="P:prolyl-tRNA aminoacylation"/>
    <property type="evidence" value="ECO:0007669"/>
    <property type="project" value="UniProtKB-UniRule"/>
</dbReference>
<dbReference type="CDD" id="cd00778">
    <property type="entry name" value="ProRS_core_arch_euk"/>
    <property type="match status" value="1"/>
</dbReference>
<dbReference type="FunFam" id="3.30.930.10:FF:000037">
    <property type="entry name" value="Proline--tRNA ligase"/>
    <property type="match status" value="1"/>
</dbReference>
<dbReference type="Gene3D" id="3.40.50.800">
    <property type="entry name" value="Anticodon-binding domain"/>
    <property type="match status" value="1"/>
</dbReference>
<dbReference type="Gene3D" id="3.30.930.10">
    <property type="entry name" value="Bira Bifunctional Protein, Domain 2"/>
    <property type="match status" value="1"/>
</dbReference>
<dbReference type="Gene3D" id="3.30.110.30">
    <property type="entry name" value="C-terminal domain of ProRS"/>
    <property type="match status" value="1"/>
</dbReference>
<dbReference type="HAMAP" id="MF_01571">
    <property type="entry name" value="Pro_tRNA_synth_type3"/>
    <property type="match status" value="1"/>
</dbReference>
<dbReference type="InterPro" id="IPR002314">
    <property type="entry name" value="aa-tRNA-synt_IIb"/>
</dbReference>
<dbReference type="InterPro" id="IPR006195">
    <property type="entry name" value="aa-tRNA-synth_II"/>
</dbReference>
<dbReference type="InterPro" id="IPR045864">
    <property type="entry name" value="aa-tRNA-synth_II/BPL/LPL"/>
</dbReference>
<dbReference type="InterPro" id="IPR004154">
    <property type="entry name" value="Anticodon-bd"/>
</dbReference>
<dbReference type="InterPro" id="IPR036621">
    <property type="entry name" value="Anticodon-bd_dom_sf"/>
</dbReference>
<dbReference type="InterPro" id="IPR002316">
    <property type="entry name" value="Pro-tRNA-ligase_IIa"/>
</dbReference>
<dbReference type="InterPro" id="IPR004499">
    <property type="entry name" value="Pro-tRNA-ligase_IIa_arc-type"/>
</dbReference>
<dbReference type="InterPro" id="IPR016061">
    <property type="entry name" value="Pro-tRNA_ligase_II_C"/>
</dbReference>
<dbReference type="InterPro" id="IPR017449">
    <property type="entry name" value="Pro-tRNA_synth_II"/>
</dbReference>
<dbReference type="InterPro" id="IPR033721">
    <property type="entry name" value="ProRS_core_arch_euk"/>
</dbReference>
<dbReference type="NCBIfam" id="TIGR00408">
    <property type="entry name" value="proS_fam_I"/>
    <property type="match status" value="1"/>
</dbReference>
<dbReference type="PANTHER" id="PTHR43382:SF2">
    <property type="entry name" value="BIFUNCTIONAL GLUTAMATE_PROLINE--TRNA LIGASE"/>
    <property type="match status" value="1"/>
</dbReference>
<dbReference type="PANTHER" id="PTHR43382">
    <property type="entry name" value="PROLYL-TRNA SYNTHETASE"/>
    <property type="match status" value="1"/>
</dbReference>
<dbReference type="Pfam" id="PF03129">
    <property type="entry name" value="HGTP_anticodon"/>
    <property type="match status" value="1"/>
</dbReference>
<dbReference type="Pfam" id="PF09180">
    <property type="entry name" value="ProRS-C_1"/>
    <property type="match status" value="1"/>
</dbReference>
<dbReference type="Pfam" id="PF00587">
    <property type="entry name" value="tRNA-synt_2b"/>
    <property type="match status" value="1"/>
</dbReference>
<dbReference type="PRINTS" id="PR01046">
    <property type="entry name" value="TRNASYNTHPRO"/>
</dbReference>
<dbReference type="SMART" id="SM00946">
    <property type="entry name" value="ProRS-C_1"/>
    <property type="match status" value="1"/>
</dbReference>
<dbReference type="SUPFAM" id="SSF64586">
    <property type="entry name" value="C-terminal domain of ProRS"/>
    <property type="match status" value="1"/>
</dbReference>
<dbReference type="SUPFAM" id="SSF52954">
    <property type="entry name" value="Class II aaRS ABD-related"/>
    <property type="match status" value="1"/>
</dbReference>
<dbReference type="SUPFAM" id="SSF55681">
    <property type="entry name" value="Class II aaRS and biotin synthetases"/>
    <property type="match status" value="1"/>
</dbReference>
<dbReference type="PROSITE" id="PS50862">
    <property type="entry name" value="AA_TRNA_LIGASE_II"/>
    <property type="match status" value="1"/>
</dbReference>
<organism>
    <name type="scientific">Onion yellows phytoplasma (strain OY-M)</name>
    <dbReference type="NCBI Taxonomy" id="262768"/>
    <lineage>
        <taxon>Bacteria</taxon>
        <taxon>Bacillati</taxon>
        <taxon>Mycoplasmatota</taxon>
        <taxon>Mollicutes</taxon>
        <taxon>Acholeplasmatales</taxon>
        <taxon>Acholeplasmataceae</taxon>
        <taxon>Candidatus Phytoplasma</taxon>
        <taxon>16SrI (Aster yellows group)</taxon>
    </lineage>
</organism>